<reference key="1">
    <citation type="submission" date="2006-09" db="EMBL/GenBank/DDBJ databases">
        <title>Complete sequence of Rhodopseudomonas palustris BisA53.</title>
        <authorList>
            <consortium name="US DOE Joint Genome Institute"/>
            <person name="Copeland A."/>
            <person name="Lucas S."/>
            <person name="Lapidus A."/>
            <person name="Barry K."/>
            <person name="Detter J.C."/>
            <person name="Glavina del Rio T."/>
            <person name="Hammon N."/>
            <person name="Israni S."/>
            <person name="Dalin E."/>
            <person name="Tice H."/>
            <person name="Pitluck S."/>
            <person name="Chain P."/>
            <person name="Malfatti S."/>
            <person name="Shin M."/>
            <person name="Vergez L."/>
            <person name="Schmutz J."/>
            <person name="Larimer F."/>
            <person name="Land M."/>
            <person name="Hauser L."/>
            <person name="Pelletier D.A."/>
            <person name="Kyrpides N."/>
            <person name="Kim E."/>
            <person name="Harwood C.S."/>
            <person name="Oda Y."/>
            <person name="Richardson P."/>
        </authorList>
    </citation>
    <scope>NUCLEOTIDE SEQUENCE [LARGE SCALE GENOMIC DNA]</scope>
    <source>
        <strain>BisA53</strain>
    </source>
</reference>
<protein>
    <recommendedName>
        <fullName evidence="1">ATP synthase subunit delta</fullName>
    </recommendedName>
    <alternativeName>
        <fullName evidence="1">ATP synthase F(1) sector subunit delta</fullName>
    </alternativeName>
    <alternativeName>
        <fullName evidence="1">F-type ATPase subunit delta</fullName>
        <shortName evidence="1">F-ATPase subunit delta</shortName>
    </alternativeName>
</protein>
<name>ATPD_RHOP5</name>
<sequence>MAAENPSVSGVAGRYATALFELARDQKSVDAVKADLDRFKAMLAESPDLTRLVRSPVFSADAQGKALVAVLAKAGIGGIAANFLQLLNANRRLFAVHDVIRAFGALVAKFKGEATADVTVAEPLNDQNLDALKSALKSVTGKDVTLNVNVDPAIIGGLVVKLGSRMVDSSLRTKLNSIKHAMKEAG</sequence>
<organism>
    <name type="scientific">Rhodopseudomonas palustris (strain BisA53)</name>
    <dbReference type="NCBI Taxonomy" id="316055"/>
    <lineage>
        <taxon>Bacteria</taxon>
        <taxon>Pseudomonadati</taxon>
        <taxon>Pseudomonadota</taxon>
        <taxon>Alphaproteobacteria</taxon>
        <taxon>Hyphomicrobiales</taxon>
        <taxon>Nitrobacteraceae</taxon>
        <taxon>Rhodopseudomonas</taxon>
    </lineage>
</organism>
<dbReference type="EMBL" id="CP000463">
    <property type="protein sequence ID" value="ABJ04242.1"/>
    <property type="molecule type" value="Genomic_DNA"/>
</dbReference>
<dbReference type="SMR" id="Q07UZ2"/>
<dbReference type="STRING" id="316055.RPE_0283"/>
<dbReference type="KEGG" id="rpe:RPE_0283"/>
<dbReference type="eggNOG" id="COG0712">
    <property type="taxonomic scope" value="Bacteria"/>
</dbReference>
<dbReference type="HOGENOM" id="CLU_085114_0_1_5"/>
<dbReference type="OrthoDB" id="9796185at2"/>
<dbReference type="GO" id="GO:0005886">
    <property type="term" value="C:plasma membrane"/>
    <property type="evidence" value="ECO:0007669"/>
    <property type="project" value="UniProtKB-SubCell"/>
</dbReference>
<dbReference type="GO" id="GO:0045259">
    <property type="term" value="C:proton-transporting ATP synthase complex"/>
    <property type="evidence" value="ECO:0007669"/>
    <property type="project" value="UniProtKB-KW"/>
</dbReference>
<dbReference type="GO" id="GO:0046933">
    <property type="term" value="F:proton-transporting ATP synthase activity, rotational mechanism"/>
    <property type="evidence" value="ECO:0007669"/>
    <property type="project" value="UniProtKB-UniRule"/>
</dbReference>
<dbReference type="Gene3D" id="1.10.520.20">
    <property type="entry name" value="N-terminal domain of the delta subunit of the F1F0-ATP synthase"/>
    <property type="match status" value="1"/>
</dbReference>
<dbReference type="HAMAP" id="MF_01416">
    <property type="entry name" value="ATP_synth_delta_bact"/>
    <property type="match status" value="1"/>
</dbReference>
<dbReference type="InterPro" id="IPR026015">
    <property type="entry name" value="ATP_synth_OSCP/delta_N_sf"/>
</dbReference>
<dbReference type="InterPro" id="IPR020781">
    <property type="entry name" value="ATPase_OSCP/d_CS"/>
</dbReference>
<dbReference type="InterPro" id="IPR000711">
    <property type="entry name" value="ATPase_OSCP/dsu"/>
</dbReference>
<dbReference type="NCBIfam" id="TIGR01145">
    <property type="entry name" value="ATP_synt_delta"/>
    <property type="match status" value="1"/>
</dbReference>
<dbReference type="NCBIfam" id="NF004406">
    <property type="entry name" value="PRK05758.3-2"/>
    <property type="match status" value="1"/>
</dbReference>
<dbReference type="PANTHER" id="PTHR11910">
    <property type="entry name" value="ATP SYNTHASE DELTA CHAIN"/>
    <property type="match status" value="1"/>
</dbReference>
<dbReference type="Pfam" id="PF00213">
    <property type="entry name" value="OSCP"/>
    <property type="match status" value="1"/>
</dbReference>
<dbReference type="PRINTS" id="PR00125">
    <property type="entry name" value="ATPASEDELTA"/>
</dbReference>
<dbReference type="SUPFAM" id="SSF47928">
    <property type="entry name" value="N-terminal domain of the delta subunit of the F1F0-ATP synthase"/>
    <property type="match status" value="1"/>
</dbReference>
<dbReference type="PROSITE" id="PS00389">
    <property type="entry name" value="ATPASE_DELTA"/>
    <property type="match status" value="1"/>
</dbReference>
<proteinExistence type="inferred from homology"/>
<feature type="chain" id="PRO_1000184780" description="ATP synthase subunit delta">
    <location>
        <begin position="1"/>
        <end position="186"/>
    </location>
</feature>
<keyword id="KW-0066">ATP synthesis</keyword>
<keyword id="KW-0997">Cell inner membrane</keyword>
<keyword id="KW-1003">Cell membrane</keyword>
<keyword id="KW-0139">CF(1)</keyword>
<keyword id="KW-0375">Hydrogen ion transport</keyword>
<keyword id="KW-0406">Ion transport</keyword>
<keyword id="KW-0472">Membrane</keyword>
<keyword id="KW-0813">Transport</keyword>
<evidence type="ECO:0000255" key="1">
    <source>
        <dbReference type="HAMAP-Rule" id="MF_01416"/>
    </source>
</evidence>
<gene>
    <name evidence="1" type="primary">atpH</name>
    <name type="ordered locus">RPE_0283</name>
</gene>
<accession>Q07UZ2</accession>
<comment type="function">
    <text evidence="1">F(1)F(0) ATP synthase produces ATP from ADP in the presence of a proton or sodium gradient. F-type ATPases consist of two structural domains, F(1) containing the extramembraneous catalytic core and F(0) containing the membrane proton channel, linked together by a central stalk and a peripheral stalk. During catalysis, ATP synthesis in the catalytic domain of F(1) is coupled via a rotary mechanism of the central stalk subunits to proton translocation.</text>
</comment>
<comment type="function">
    <text evidence="1">This protein is part of the stalk that links CF(0) to CF(1). It either transmits conformational changes from CF(0) to CF(1) or is implicated in proton conduction.</text>
</comment>
<comment type="subunit">
    <text evidence="1">F-type ATPases have 2 components, F(1) - the catalytic core - and F(0) - the membrane proton channel. F(1) has five subunits: alpha(3), beta(3), gamma(1), delta(1), epsilon(1). CF(0) has four main subunits: a(1), b(1), b'(1) and c(10-14). The alpha and beta chains form an alternating ring which encloses part of the gamma chain. F(1) is attached to F(0) by a central stalk formed by the gamma and epsilon chains, while a peripheral stalk is formed by the delta, b and b' chains.</text>
</comment>
<comment type="subcellular location">
    <subcellularLocation>
        <location evidence="1">Cell inner membrane</location>
        <topology evidence="1">Peripheral membrane protein</topology>
    </subcellularLocation>
</comment>
<comment type="similarity">
    <text evidence="1">Belongs to the ATPase delta chain family.</text>
</comment>